<accession>O34816</accession>
<accession>Q796K7</accession>
<organism>
    <name type="scientific">Bacillus subtilis (strain 168)</name>
    <dbReference type="NCBI Taxonomy" id="224308"/>
    <lineage>
        <taxon>Bacteria</taxon>
        <taxon>Bacillati</taxon>
        <taxon>Bacillota</taxon>
        <taxon>Bacilli</taxon>
        <taxon>Bacillales</taxon>
        <taxon>Bacillaceae</taxon>
        <taxon>Bacillus</taxon>
    </lineage>
</organism>
<protein>
    <recommendedName>
        <fullName>Putative L,D-transpeptidase YkuD</fullName>
        <ecNumber>2.-.-.-</ecNumber>
    </recommendedName>
    <alternativeName>
        <fullName>Spore protein YkuD</fullName>
    </alternativeName>
</protein>
<comment type="function">
    <text evidence="3">Probable enzyme that may play an important role in cell wall biology.</text>
</comment>
<comment type="pathway">
    <text>Cell wall biogenesis; peptidoglycan biosynthesis.</text>
</comment>
<comment type="subunit">
    <text evidence="3">Monomer.</text>
</comment>
<comment type="subcellular location">
    <subcellularLocation>
        <location evidence="5">Spore wall</location>
    </subcellularLocation>
    <text>Probably localized either on the surface of the outer spore membrane and/or in the inner spore coat.</text>
</comment>
<comment type="developmental stage">
    <text>Expressed in the mother cell compartment from T4 of sporulation.</text>
</comment>
<comment type="domain">
    <text>LysM domains are thought to be involved in peptidoglycan binding.</text>
</comment>
<comment type="miscellaneous">
    <text>Regulated by SigK. Could also be negatively regulated by GerE. Transcribed by SigK RNA polymerase.</text>
</comment>
<comment type="miscellaneous">
    <text>Inactivation of the ykuD gene does not affect vegetative growth, spore resistance to heat, chloroform and lysozyme, or spore germination in the presence of L-alanine.</text>
</comment>
<comment type="similarity">
    <text evidence="4">Belongs to the YkuD family.</text>
</comment>
<name>YKUD_BACSU</name>
<evidence type="ECO:0000255" key="1">
    <source>
        <dbReference type="PROSITE-ProRule" id="PRU01118"/>
    </source>
</evidence>
<evidence type="ECO:0000255" key="2">
    <source>
        <dbReference type="PROSITE-ProRule" id="PRU01373"/>
    </source>
</evidence>
<evidence type="ECO:0000269" key="3">
    <source>
    </source>
</evidence>
<evidence type="ECO:0000305" key="4"/>
<evidence type="ECO:0000305" key="5">
    <source>
    </source>
</evidence>
<evidence type="ECO:0007829" key="6">
    <source>
        <dbReference type="PDB" id="4A1K"/>
    </source>
</evidence>
<sequence length="164" mass="17643">MLTYQVKQGDTLNSIAADFRISTAALLQANPSLQAGLTAGQSIVIPGLPDPYTIPYHIAVSIGAKTLTLSLNNRVMKTYPIAVGKILTQTPTGEFYIINRQRNPGGPFGAYWLSLSKQHYGIHGTNNPASIGKAVSKGCIRMHNKDVIELASIVPNGTRVTINR</sequence>
<proteinExistence type="evidence at protein level"/>
<feature type="chain" id="PRO_0000227661" description="Putative L,D-transpeptidase YkuD">
    <location>
        <begin position="1"/>
        <end position="164"/>
    </location>
</feature>
<feature type="domain" description="LysM" evidence="1">
    <location>
        <begin position="2"/>
        <end position="45"/>
    </location>
</feature>
<feature type="domain" description="L,D-TPase catalytic" evidence="2">
    <location>
        <begin position="56"/>
        <end position="163"/>
    </location>
</feature>
<feature type="active site" description="Proton donor/acceptor" evidence="2">
    <location>
        <position position="123"/>
    </location>
</feature>
<feature type="active site" description="Nucleophile" evidence="2">
    <location>
        <position position="139"/>
    </location>
</feature>
<feature type="strand" evidence="6">
    <location>
        <begin position="2"/>
        <end position="5"/>
    </location>
</feature>
<feature type="helix" evidence="6">
    <location>
        <begin position="12"/>
        <end position="18"/>
    </location>
</feature>
<feature type="helix" evidence="6">
    <location>
        <begin position="23"/>
        <end position="29"/>
    </location>
</feature>
<feature type="helix" evidence="6">
    <location>
        <begin position="31"/>
        <end position="35"/>
    </location>
</feature>
<feature type="strand" evidence="6">
    <location>
        <begin position="42"/>
        <end position="45"/>
    </location>
</feature>
<feature type="helix" evidence="6">
    <location>
        <begin position="51"/>
        <end position="53"/>
    </location>
</feature>
<feature type="strand" evidence="6">
    <location>
        <begin position="56"/>
        <end position="61"/>
    </location>
</feature>
<feature type="turn" evidence="6">
    <location>
        <begin position="62"/>
        <end position="65"/>
    </location>
</feature>
<feature type="strand" evidence="6">
    <location>
        <begin position="66"/>
        <end position="71"/>
    </location>
</feature>
<feature type="strand" evidence="6">
    <location>
        <begin position="74"/>
        <end position="80"/>
    </location>
</feature>
<feature type="strand" evidence="6">
    <location>
        <begin position="82"/>
        <end position="84"/>
    </location>
</feature>
<feature type="helix" evidence="6">
    <location>
        <begin position="86"/>
        <end position="88"/>
    </location>
</feature>
<feature type="strand" evidence="6">
    <location>
        <begin position="93"/>
        <end position="102"/>
    </location>
</feature>
<feature type="helix" evidence="6">
    <location>
        <begin position="106"/>
        <end position="108"/>
    </location>
</feature>
<feature type="strand" evidence="6">
    <location>
        <begin position="111"/>
        <end position="117"/>
    </location>
</feature>
<feature type="strand" evidence="6">
    <location>
        <begin position="121"/>
        <end position="123"/>
    </location>
</feature>
<feature type="helix" evidence="6">
    <location>
        <begin position="128"/>
        <end position="130"/>
    </location>
</feature>
<feature type="strand" evidence="6">
    <location>
        <begin position="133"/>
        <end position="141"/>
    </location>
</feature>
<feature type="helix" evidence="6">
    <location>
        <begin position="144"/>
        <end position="153"/>
    </location>
</feature>
<feature type="strand" evidence="6">
    <location>
        <begin position="159"/>
        <end position="163"/>
    </location>
</feature>
<dbReference type="EC" id="2.-.-.-"/>
<dbReference type="EMBL" id="AJ222587">
    <property type="protein sequence ID" value="CAA10867.1"/>
    <property type="molecule type" value="Genomic_DNA"/>
</dbReference>
<dbReference type="EMBL" id="AL009126">
    <property type="protein sequence ID" value="CAB13277.1"/>
    <property type="molecule type" value="Genomic_DNA"/>
</dbReference>
<dbReference type="PIR" id="A69865">
    <property type="entry name" value="A69865"/>
</dbReference>
<dbReference type="RefSeq" id="WP_010886500.1">
    <property type="nucleotide sequence ID" value="NZ_OZ025638.1"/>
</dbReference>
<dbReference type="PDB" id="1Y7M">
    <property type="method" value="X-ray"/>
    <property type="resolution" value="2.05 A"/>
    <property type="chains" value="A/B=1-164"/>
</dbReference>
<dbReference type="PDB" id="2MTZ">
    <property type="method" value="NMR"/>
    <property type="chains" value="A=2-164"/>
</dbReference>
<dbReference type="PDB" id="3ZQD">
    <property type="method" value="NMR"/>
    <property type="chains" value="A=2-164"/>
</dbReference>
<dbReference type="PDB" id="4A1I">
    <property type="method" value="X-ray"/>
    <property type="resolution" value="1.76 A"/>
    <property type="chains" value="A/B/C/D/E/F/G/H=1-164"/>
</dbReference>
<dbReference type="PDB" id="4A1J">
    <property type="method" value="X-ray"/>
    <property type="resolution" value="2.20 A"/>
    <property type="chains" value="A/B=1-164"/>
</dbReference>
<dbReference type="PDB" id="4A1K">
    <property type="method" value="X-ray"/>
    <property type="resolution" value="1.75 A"/>
    <property type="chains" value="A=1-164"/>
</dbReference>
<dbReference type="PDB" id="4A52">
    <property type="method" value="NMR"/>
    <property type="chains" value="A=2-164"/>
</dbReference>
<dbReference type="PDBsum" id="1Y7M"/>
<dbReference type="PDBsum" id="2MTZ"/>
<dbReference type="PDBsum" id="3ZQD"/>
<dbReference type="PDBsum" id="4A1I"/>
<dbReference type="PDBsum" id="4A1J"/>
<dbReference type="PDBsum" id="4A1K"/>
<dbReference type="PDBsum" id="4A52"/>
<dbReference type="BMRB" id="O34816"/>
<dbReference type="SMR" id="O34816"/>
<dbReference type="FunCoup" id="O34816">
    <property type="interactions" value="23"/>
</dbReference>
<dbReference type="STRING" id="224308.BSU14040"/>
<dbReference type="CAZy" id="CBM50">
    <property type="family name" value="Carbohydrate-Binding Module Family 50"/>
</dbReference>
<dbReference type="MEROPS" id="C82.003"/>
<dbReference type="PaxDb" id="224308-BSU14040"/>
<dbReference type="EnsemblBacteria" id="CAB13277">
    <property type="protein sequence ID" value="CAB13277"/>
    <property type="gene ID" value="BSU_14040"/>
</dbReference>
<dbReference type="GeneID" id="939216"/>
<dbReference type="KEGG" id="bsu:BSU14040"/>
<dbReference type="PATRIC" id="fig|224308.43.peg.1488"/>
<dbReference type="eggNOG" id="COG1376">
    <property type="taxonomic scope" value="Bacteria"/>
</dbReference>
<dbReference type="InParanoid" id="O34816"/>
<dbReference type="OrthoDB" id="9787225at2"/>
<dbReference type="PhylomeDB" id="O34816"/>
<dbReference type="BioCyc" id="BSUB:BSU14040-MONOMER"/>
<dbReference type="UniPathway" id="UPA00219"/>
<dbReference type="EvolutionaryTrace" id="O34816"/>
<dbReference type="Proteomes" id="UP000001570">
    <property type="component" value="Chromosome"/>
</dbReference>
<dbReference type="GO" id="GO:0031160">
    <property type="term" value="C:spore wall"/>
    <property type="evidence" value="ECO:0007669"/>
    <property type="project" value="UniProtKB-SubCell"/>
</dbReference>
<dbReference type="GO" id="GO:0016757">
    <property type="term" value="F:glycosyltransferase activity"/>
    <property type="evidence" value="ECO:0007669"/>
    <property type="project" value="UniProtKB-KW"/>
</dbReference>
<dbReference type="GO" id="GO:0071972">
    <property type="term" value="F:peptidoglycan L,D-transpeptidase activity"/>
    <property type="evidence" value="ECO:0000318"/>
    <property type="project" value="GO_Central"/>
</dbReference>
<dbReference type="GO" id="GO:0071555">
    <property type="term" value="P:cell wall organization"/>
    <property type="evidence" value="ECO:0007669"/>
    <property type="project" value="UniProtKB-KW"/>
</dbReference>
<dbReference type="GO" id="GO:0018104">
    <property type="term" value="P:peptidoglycan-protein cross-linking"/>
    <property type="evidence" value="ECO:0000318"/>
    <property type="project" value="GO_Central"/>
</dbReference>
<dbReference type="GO" id="GO:0008360">
    <property type="term" value="P:regulation of cell shape"/>
    <property type="evidence" value="ECO:0007669"/>
    <property type="project" value="UniProtKB-KW"/>
</dbReference>
<dbReference type="GO" id="GO:0030435">
    <property type="term" value="P:sporulation resulting in formation of a cellular spore"/>
    <property type="evidence" value="ECO:0007669"/>
    <property type="project" value="UniProtKB-KW"/>
</dbReference>
<dbReference type="CDD" id="cd00118">
    <property type="entry name" value="LysM"/>
    <property type="match status" value="1"/>
</dbReference>
<dbReference type="CDD" id="cd16913">
    <property type="entry name" value="YkuD_like"/>
    <property type="match status" value="1"/>
</dbReference>
<dbReference type="FunFam" id="2.40.440.10:FF:000003">
    <property type="entry name" value="L,D-transpeptidase YciB"/>
    <property type="match status" value="1"/>
</dbReference>
<dbReference type="FunFam" id="3.10.350.10:FF:000003">
    <property type="entry name" value="Membrane-bound lytic murein transglycosylase D"/>
    <property type="match status" value="1"/>
</dbReference>
<dbReference type="Gene3D" id="2.40.440.10">
    <property type="entry name" value="L,D-transpeptidase catalytic domain-like"/>
    <property type="match status" value="1"/>
</dbReference>
<dbReference type="Gene3D" id="3.10.350.10">
    <property type="entry name" value="LysM domain"/>
    <property type="match status" value="1"/>
</dbReference>
<dbReference type="InterPro" id="IPR050979">
    <property type="entry name" value="LD-transpeptidase"/>
</dbReference>
<dbReference type="InterPro" id="IPR005490">
    <property type="entry name" value="LD_TPept_cat_dom"/>
</dbReference>
<dbReference type="InterPro" id="IPR018392">
    <property type="entry name" value="LysM_dom"/>
</dbReference>
<dbReference type="InterPro" id="IPR036779">
    <property type="entry name" value="LysM_dom_sf"/>
</dbReference>
<dbReference type="InterPro" id="IPR038063">
    <property type="entry name" value="Transpep_catalytic_dom"/>
</dbReference>
<dbReference type="PANTHER" id="PTHR30582">
    <property type="entry name" value="L,D-TRANSPEPTIDASE"/>
    <property type="match status" value="1"/>
</dbReference>
<dbReference type="PANTHER" id="PTHR30582:SF24">
    <property type="entry name" value="L,D-TRANSPEPTIDASE ERFK_SRFK-RELATED"/>
    <property type="match status" value="1"/>
</dbReference>
<dbReference type="Pfam" id="PF01476">
    <property type="entry name" value="LysM"/>
    <property type="match status" value="1"/>
</dbReference>
<dbReference type="Pfam" id="PF03734">
    <property type="entry name" value="YkuD"/>
    <property type="match status" value="1"/>
</dbReference>
<dbReference type="SMART" id="SM00257">
    <property type="entry name" value="LysM"/>
    <property type="match status" value="1"/>
</dbReference>
<dbReference type="SUPFAM" id="SSF141523">
    <property type="entry name" value="L,D-transpeptidase catalytic domain-like"/>
    <property type="match status" value="1"/>
</dbReference>
<dbReference type="SUPFAM" id="SSF54106">
    <property type="entry name" value="LysM domain"/>
    <property type="match status" value="1"/>
</dbReference>
<dbReference type="PROSITE" id="PS52029">
    <property type="entry name" value="LD_TPASE"/>
    <property type="match status" value="1"/>
</dbReference>
<dbReference type="PROSITE" id="PS51782">
    <property type="entry name" value="LYSM"/>
    <property type="match status" value="1"/>
</dbReference>
<reference key="1">
    <citation type="submission" date="1997-11" db="EMBL/GenBank/DDBJ databases">
        <title>Sequence of the Bacillus subtilis chromosome from ykuA to cse-15.</title>
        <authorList>
            <person name="Scanlan E."/>
            <person name="Devine K.M."/>
        </authorList>
    </citation>
    <scope>NUCLEOTIDE SEQUENCE [GENOMIC DNA]</scope>
    <source>
        <strain>168</strain>
    </source>
</reference>
<reference key="2">
    <citation type="journal article" date="1997" name="Nature">
        <title>The complete genome sequence of the Gram-positive bacterium Bacillus subtilis.</title>
        <authorList>
            <person name="Kunst F."/>
            <person name="Ogasawara N."/>
            <person name="Moszer I."/>
            <person name="Albertini A.M."/>
            <person name="Alloni G."/>
            <person name="Azevedo V."/>
            <person name="Bertero M.G."/>
            <person name="Bessieres P."/>
            <person name="Bolotin A."/>
            <person name="Borchert S."/>
            <person name="Borriss R."/>
            <person name="Boursier L."/>
            <person name="Brans A."/>
            <person name="Braun M."/>
            <person name="Brignell S.C."/>
            <person name="Bron S."/>
            <person name="Brouillet S."/>
            <person name="Bruschi C.V."/>
            <person name="Caldwell B."/>
            <person name="Capuano V."/>
            <person name="Carter N.M."/>
            <person name="Choi S.-K."/>
            <person name="Codani J.-J."/>
            <person name="Connerton I.F."/>
            <person name="Cummings N.J."/>
            <person name="Daniel R.A."/>
            <person name="Denizot F."/>
            <person name="Devine K.M."/>
            <person name="Duesterhoeft A."/>
            <person name="Ehrlich S.D."/>
            <person name="Emmerson P.T."/>
            <person name="Entian K.-D."/>
            <person name="Errington J."/>
            <person name="Fabret C."/>
            <person name="Ferrari E."/>
            <person name="Foulger D."/>
            <person name="Fritz C."/>
            <person name="Fujita M."/>
            <person name="Fujita Y."/>
            <person name="Fuma S."/>
            <person name="Galizzi A."/>
            <person name="Galleron N."/>
            <person name="Ghim S.-Y."/>
            <person name="Glaser P."/>
            <person name="Goffeau A."/>
            <person name="Golightly E.J."/>
            <person name="Grandi G."/>
            <person name="Guiseppi G."/>
            <person name="Guy B.J."/>
            <person name="Haga K."/>
            <person name="Haiech J."/>
            <person name="Harwood C.R."/>
            <person name="Henaut A."/>
            <person name="Hilbert H."/>
            <person name="Holsappel S."/>
            <person name="Hosono S."/>
            <person name="Hullo M.-F."/>
            <person name="Itaya M."/>
            <person name="Jones L.-M."/>
            <person name="Joris B."/>
            <person name="Karamata D."/>
            <person name="Kasahara Y."/>
            <person name="Klaerr-Blanchard M."/>
            <person name="Klein C."/>
            <person name="Kobayashi Y."/>
            <person name="Koetter P."/>
            <person name="Koningstein G."/>
            <person name="Krogh S."/>
            <person name="Kumano M."/>
            <person name="Kurita K."/>
            <person name="Lapidus A."/>
            <person name="Lardinois S."/>
            <person name="Lauber J."/>
            <person name="Lazarevic V."/>
            <person name="Lee S.-M."/>
            <person name="Levine A."/>
            <person name="Liu H."/>
            <person name="Masuda S."/>
            <person name="Mauel C."/>
            <person name="Medigue C."/>
            <person name="Medina N."/>
            <person name="Mellado R.P."/>
            <person name="Mizuno M."/>
            <person name="Moestl D."/>
            <person name="Nakai S."/>
            <person name="Noback M."/>
            <person name="Noone D."/>
            <person name="O'Reilly M."/>
            <person name="Ogawa K."/>
            <person name="Ogiwara A."/>
            <person name="Oudega B."/>
            <person name="Park S.-H."/>
            <person name="Parro V."/>
            <person name="Pohl T.M."/>
            <person name="Portetelle D."/>
            <person name="Porwollik S."/>
            <person name="Prescott A.M."/>
            <person name="Presecan E."/>
            <person name="Pujic P."/>
            <person name="Purnelle B."/>
            <person name="Rapoport G."/>
            <person name="Rey M."/>
            <person name="Reynolds S."/>
            <person name="Rieger M."/>
            <person name="Rivolta C."/>
            <person name="Rocha E."/>
            <person name="Roche B."/>
            <person name="Rose M."/>
            <person name="Sadaie Y."/>
            <person name="Sato T."/>
            <person name="Scanlan E."/>
            <person name="Schleich S."/>
            <person name="Schroeter R."/>
            <person name="Scoffone F."/>
            <person name="Sekiguchi J."/>
            <person name="Sekowska A."/>
            <person name="Seror S.J."/>
            <person name="Serror P."/>
            <person name="Shin B.-S."/>
            <person name="Soldo B."/>
            <person name="Sorokin A."/>
            <person name="Tacconi E."/>
            <person name="Takagi T."/>
            <person name="Takahashi H."/>
            <person name="Takemaru K."/>
            <person name="Takeuchi M."/>
            <person name="Tamakoshi A."/>
            <person name="Tanaka T."/>
            <person name="Terpstra P."/>
            <person name="Tognoni A."/>
            <person name="Tosato V."/>
            <person name="Uchiyama S."/>
            <person name="Vandenbol M."/>
            <person name="Vannier F."/>
            <person name="Vassarotti A."/>
            <person name="Viari A."/>
            <person name="Wambutt R."/>
            <person name="Wedler E."/>
            <person name="Wedler H."/>
            <person name="Weitzenegger T."/>
            <person name="Winters P."/>
            <person name="Wipat A."/>
            <person name="Yamamoto H."/>
            <person name="Yamane K."/>
            <person name="Yasumoto K."/>
            <person name="Yata K."/>
            <person name="Yoshida K."/>
            <person name="Yoshikawa H.-F."/>
            <person name="Zumstein E."/>
            <person name="Yoshikawa H."/>
            <person name="Danchin A."/>
        </authorList>
    </citation>
    <scope>NUCLEOTIDE SEQUENCE [LARGE SCALE GENOMIC DNA]</scope>
    <source>
        <strain>168</strain>
    </source>
</reference>
<reference key="3">
    <citation type="journal article" date="2000" name="J. Biochem.">
        <title>Synthesis and characterization of the spore proteins of Bacillus subtilis YdhD, YkuD, and YkvP, which carry a motif conserved among cell wall binding proteins.</title>
        <authorList>
            <person name="Kodama T."/>
            <person name="Takamatsu H."/>
            <person name="Asai K."/>
            <person name="Ogasawara N."/>
            <person name="Sadaie Y."/>
            <person name="Watabe K."/>
        </authorList>
    </citation>
    <scope>SUBCELLULAR LOCATION</scope>
    <scope>REGULATION</scope>
    <scope>EXPRESSION</scope>
    <source>
        <strain>168</strain>
    </source>
</reference>
<reference key="4">
    <citation type="journal article" date="2006" name="Proteins">
        <title>B. subtilis ykuD protein at 2.0 A resolution: insights into the structure and function of a novel, ubiquitous family of bacterial enzymes.</title>
        <authorList>
            <person name="Bielnicki J."/>
            <person name="Devedjiev Y."/>
            <person name="Derewenda U."/>
            <person name="Dauter Z."/>
            <person name="Joachimiak A."/>
            <person name="Derewenda Z.S."/>
        </authorList>
    </citation>
    <scope>X-RAY CRYSTALLOGRAPHY (2.0 ANGSTROMS)</scope>
    <scope>SUBUNIT</scope>
    <scope>FUNCTION</scope>
</reference>
<gene>
    <name type="primary">ykuD</name>
    <name type="ordered locus">BSU14040</name>
</gene>
<keyword id="KW-0002">3D-structure</keyword>
<keyword id="KW-0133">Cell shape</keyword>
<keyword id="KW-0961">Cell wall biogenesis/degradation</keyword>
<keyword id="KW-0328">Glycosyltransferase</keyword>
<keyword id="KW-0378">Hydrolase</keyword>
<keyword id="KW-0573">Peptidoglycan synthesis</keyword>
<keyword id="KW-1185">Reference proteome</keyword>
<keyword id="KW-0749">Sporulation</keyword>
<keyword id="KW-0808">Transferase</keyword>